<keyword id="KW-0028">Amino-acid biosynthesis</keyword>
<keyword id="KW-0057">Aromatic amino acid biosynthesis</keyword>
<keyword id="KW-0413">Isomerase</keyword>
<keyword id="KW-1185">Reference proteome</keyword>
<keyword id="KW-0822">Tryptophan biosynthesis</keyword>
<protein>
    <recommendedName>
        <fullName evidence="1">N-(5'-phosphoribosyl)anthranilate isomerase</fullName>
        <shortName evidence="1">PRAI</shortName>
        <ecNumber evidence="1">5.3.1.24</ecNumber>
    </recommendedName>
</protein>
<accession>Q8UJB1</accession>
<organism>
    <name type="scientific">Agrobacterium fabrum (strain C58 / ATCC 33970)</name>
    <name type="common">Agrobacterium tumefaciens (strain C58)</name>
    <dbReference type="NCBI Taxonomy" id="176299"/>
    <lineage>
        <taxon>Bacteria</taxon>
        <taxon>Pseudomonadati</taxon>
        <taxon>Pseudomonadota</taxon>
        <taxon>Alphaproteobacteria</taxon>
        <taxon>Hyphomicrobiales</taxon>
        <taxon>Rhizobiaceae</taxon>
        <taxon>Rhizobium/Agrobacterium group</taxon>
        <taxon>Agrobacterium</taxon>
        <taxon>Agrobacterium tumefaciens complex</taxon>
    </lineage>
</organism>
<evidence type="ECO:0000255" key="1">
    <source>
        <dbReference type="HAMAP-Rule" id="MF_00135"/>
    </source>
</evidence>
<comment type="catalytic activity">
    <reaction evidence="1">
        <text>N-(5-phospho-beta-D-ribosyl)anthranilate = 1-(2-carboxyphenylamino)-1-deoxy-D-ribulose 5-phosphate</text>
        <dbReference type="Rhea" id="RHEA:21540"/>
        <dbReference type="ChEBI" id="CHEBI:18277"/>
        <dbReference type="ChEBI" id="CHEBI:58613"/>
        <dbReference type="EC" id="5.3.1.24"/>
    </reaction>
</comment>
<comment type="pathway">
    <text evidence="1">Amino-acid biosynthesis; L-tryptophan biosynthesis; L-tryptophan from chorismate: step 3/5.</text>
</comment>
<comment type="similarity">
    <text evidence="1">Belongs to the TrpF family.</text>
</comment>
<proteinExistence type="inferred from homology"/>
<gene>
    <name evidence="1" type="primary">trpF</name>
    <name type="ordered locus">Atu0017</name>
    <name type="ORF">AGR_C_26</name>
</gene>
<feature type="chain" id="PRO_0000154340" description="N-(5'-phosphoribosyl)anthranilate isomerase">
    <location>
        <begin position="1"/>
        <end position="220"/>
    </location>
</feature>
<sequence length="220" mass="23633">MKPDIKICGLKTPETLERVVRRGASHVGFIFFEKSPRYIEPDLAGRLAEAARGAAKVVAVTVDADNDYLDEIVDLVRPDILQLHGSESPERLLHIKALYGLPVMKAISIRDAADLAKIEPYIGIADRFLLDAKAPAGSDLPGGNGVSFDWTILRSLDESVDYMLSGGLNKDNVAEALAETRASGLDLSSGVESAPGVKDLSKIDAFFDVVNDWSKGPKGA</sequence>
<name>TRPF_AGRFC</name>
<reference key="1">
    <citation type="journal article" date="2001" name="Science">
        <title>The genome of the natural genetic engineer Agrobacterium tumefaciens C58.</title>
        <authorList>
            <person name="Wood D.W."/>
            <person name="Setubal J.C."/>
            <person name="Kaul R."/>
            <person name="Monks D.E."/>
            <person name="Kitajima J.P."/>
            <person name="Okura V.K."/>
            <person name="Zhou Y."/>
            <person name="Chen L."/>
            <person name="Wood G.E."/>
            <person name="Almeida N.F. Jr."/>
            <person name="Woo L."/>
            <person name="Chen Y."/>
            <person name="Paulsen I.T."/>
            <person name="Eisen J.A."/>
            <person name="Karp P.D."/>
            <person name="Bovee D. Sr."/>
            <person name="Chapman P."/>
            <person name="Clendenning J."/>
            <person name="Deatherage G."/>
            <person name="Gillet W."/>
            <person name="Grant C."/>
            <person name="Kutyavin T."/>
            <person name="Levy R."/>
            <person name="Li M.-J."/>
            <person name="McClelland E."/>
            <person name="Palmieri A."/>
            <person name="Raymond C."/>
            <person name="Rouse G."/>
            <person name="Saenphimmachak C."/>
            <person name="Wu Z."/>
            <person name="Romero P."/>
            <person name="Gordon D."/>
            <person name="Zhang S."/>
            <person name="Yoo H."/>
            <person name="Tao Y."/>
            <person name="Biddle P."/>
            <person name="Jung M."/>
            <person name="Krespan W."/>
            <person name="Perry M."/>
            <person name="Gordon-Kamm B."/>
            <person name="Liao L."/>
            <person name="Kim S."/>
            <person name="Hendrick C."/>
            <person name="Zhao Z.-Y."/>
            <person name="Dolan M."/>
            <person name="Chumley F."/>
            <person name="Tingey S.V."/>
            <person name="Tomb J.-F."/>
            <person name="Gordon M.P."/>
            <person name="Olson M.V."/>
            <person name="Nester E.W."/>
        </authorList>
    </citation>
    <scope>NUCLEOTIDE SEQUENCE [LARGE SCALE GENOMIC DNA]</scope>
    <source>
        <strain>C58 / ATCC 33970</strain>
    </source>
</reference>
<reference key="2">
    <citation type="journal article" date="2001" name="Science">
        <title>Genome sequence of the plant pathogen and biotechnology agent Agrobacterium tumefaciens C58.</title>
        <authorList>
            <person name="Goodner B."/>
            <person name="Hinkle G."/>
            <person name="Gattung S."/>
            <person name="Miller N."/>
            <person name="Blanchard M."/>
            <person name="Qurollo B."/>
            <person name="Goldman B.S."/>
            <person name="Cao Y."/>
            <person name="Askenazi M."/>
            <person name="Halling C."/>
            <person name="Mullin L."/>
            <person name="Houmiel K."/>
            <person name="Gordon J."/>
            <person name="Vaudin M."/>
            <person name="Iartchouk O."/>
            <person name="Epp A."/>
            <person name="Liu F."/>
            <person name="Wollam C."/>
            <person name="Allinger M."/>
            <person name="Doughty D."/>
            <person name="Scott C."/>
            <person name="Lappas C."/>
            <person name="Markelz B."/>
            <person name="Flanagan C."/>
            <person name="Crowell C."/>
            <person name="Gurson J."/>
            <person name="Lomo C."/>
            <person name="Sear C."/>
            <person name="Strub G."/>
            <person name="Cielo C."/>
            <person name="Slater S."/>
        </authorList>
    </citation>
    <scope>NUCLEOTIDE SEQUENCE [LARGE SCALE GENOMIC DNA]</scope>
    <source>
        <strain>C58 / ATCC 33970</strain>
    </source>
</reference>
<dbReference type="EC" id="5.3.1.24" evidence="1"/>
<dbReference type="EMBL" id="AE007869">
    <property type="protein sequence ID" value="AAK85842.1"/>
    <property type="molecule type" value="Genomic_DNA"/>
</dbReference>
<dbReference type="PIR" id="A97361">
    <property type="entry name" value="A97361"/>
</dbReference>
<dbReference type="PIR" id="AB2579">
    <property type="entry name" value="AB2579"/>
</dbReference>
<dbReference type="RefSeq" id="NP_353057.1">
    <property type="nucleotide sequence ID" value="NC_003062.2"/>
</dbReference>
<dbReference type="RefSeq" id="WP_010970605.1">
    <property type="nucleotide sequence ID" value="NC_003062.2"/>
</dbReference>
<dbReference type="SMR" id="Q8UJB1"/>
<dbReference type="STRING" id="176299.Atu0017"/>
<dbReference type="EnsemblBacteria" id="AAK85842">
    <property type="protein sequence ID" value="AAK85842"/>
    <property type="gene ID" value="Atu0017"/>
</dbReference>
<dbReference type="GeneID" id="1132055"/>
<dbReference type="KEGG" id="atu:Atu0017"/>
<dbReference type="PATRIC" id="fig|176299.10.peg.18"/>
<dbReference type="eggNOG" id="COG0135">
    <property type="taxonomic scope" value="Bacteria"/>
</dbReference>
<dbReference type="HOGENOM" id="CLU_076364_1_1_5"/>
<dbReference type="OrthoDB" id="9796196at2"/>
<dbReference type="PhylomeDB" id="Q8UJB1"/>
<dbReference type="BioCyc" id="AGRO:ATU0017-MONOMER"/>
<dbReference type="UniPathway" id="UPA00035">
    <property type="reaction ID" value="UER00042"/>
</dbReference>
<dbReference type="Proteomes" id="UP000000813">
    <property type="component" value="Chromosome circular"/>
</dbReference>
<dbReference type="GO" id="GO:0004640">
    <property type="term" value="F:phosphoribosylanthranilate isomerase activity"/>
    <property type="evidence" value="ECO:0007669"/>
    <property type="project" value="UniProtKB-UniRule"/>
</dbReference>
<dbReference type="GO" id="GO:0000162">
    <property type="term" value="P:L-tryptophan biosynthetic process"/>
    <property type="evidence" value="ECO:0007669"/>
    <property type="project" value="UniProtKB-UniRule"/>
</dbReference>
<dbReference type="CDD" id="cd00405">
    <property type="entry name" value="PRAI"/>
    <property type="match status" value="1"/>
</dbReference>
<dbReference type="Gene3D" id="3.20.20.70">
    <property type="entry name" value="Aldolase class I"/>
    <property type="match status" value="1"/>
</dbReference>
<dbReference type="HAMAP" id="MF_00135">
    <property type="entry name" value="PRAI"/>
    <property type="match status" value="1"/>
</dbReference>
<dbReference type="InterPro" id="IPR013785">
    <property type="entry name" value="Aldolase_TIM"/>
</dbReference>
<dbReference type="InterPro" id="IPR001240">
    <property type="entry name" value="PRAI_dom"/>
</dbReference>
<dbReference type="InterPro" id="IPR011060">
    <property type="entry name" value="RibuloseP-bd_barrel"/>
</dbReference>
<dbReference type="InterPro" id="IPR044643">
    <property type="entry name" value="TrpF_fam"/>
</dbReference>
<dbReference type="NCBIfam" id="NF002295">
    <property type="entry name" value="PRK01222.1-1"/>
    <property type="match status" value="1"/>
</dbReference>
<dbReference type="PANTHER" id="PTHR42894">
    <property type="entry name" value="N-(5'-PHOSPHORIBOSYL)ANTHRANILATE ISOMERASE"/>
    <property type="match status" value="1"/>
</dbReference>
<dbReference type="PANTHER" id="PTHR42894:SF1">
    <property type="entry name" value="N-(5'-PHOSPHORIBOSYL)ANTHRANILATE ISOMERASE"/>
    <property type="match status" value="1"/>
</dbReference>
<dbReference type="Pfam" id="PF00697">
    <property type="entry name" value="PRAI"/>
    <property type="match status" value="1"/>
</dbReference>
<dbReference type="SUPFAM" id="SSF51366">
    <property type="entry name" value="Ribulose-phoshate binding barrel"/>
    <property type="match status" value="1"/>
</dbReference>